<name>RL3_UREP2</name>
<comment type="function">
    <text evidence="1">One of the primary rRNA binding proteins, it binds directly near the 3'-end of the 23S rRNA, where it nucleates assembly of the 50S subunit.</text>
</comment>
<comment type="subunit">
    <text evidence="1">Part of the 50S ribosomal subunit. Forms a cluster with proteins L14 and L19.</text>
</comment>
<comment type="similarity">
    <text evidence="1">Belongs to the universal ribosomal protein uL3 family.</text>
</comment>
<reference key="1">
    <citation type="submission" date="2008-02" db="EMBL/GenBank/DDBJ databases">
        <title>Genome sequence of Ureaplasma parvum serovar 3.</title>
        <authorList>
            <person name="Methe B.A."/>
            <person name="Glass J."/>
            <person name="Waites K."/>
            <person name="Shrivastava S."/>
        </authorList>
    </citation>
    <scope>NUCLEOTIDE SEQUENCE [LARGE SCALE GENOMIC DNA]</scope>
    <source>
        <strain>ATCC 27815 / 27 / NCTC 11736</strain>
    </source>
</reference>
<sequence length="233" mass="24994">MKSLLGTKVGMTQVFTETGKAVAATVIYVEPNKVLAVKTNEKDGYSAIQIGYETVKEKALNKPLLGQFKKANSDPKRHIKEFRDVVAEVGAELTVSEFEPGQLVNAQAYTKGHGFTGSIKRHNFSMGPMGHGAGYPHRYVGSIAKGRGGSQAQRVFKGTKLPGHYGHELVTTKNLLVLDVKANENLILIKGAIPGPKGSIVLLKSAKKVGHIVSDPQVVNYLANKASSSEANE</sequence>
<accession>B1AIM0</accession>
<evidence type="ECO:0000255" key="1">
    <source>
        <dbReference type="HAMAP-Rule" id="MF_01325"/>
    </source>
</evidence>
<evidence type="ECO:0000305" key="2"/>
<keyword id="KW-0687">Ribonucleoprotein</keyword>
<keyword id="KW-0689">Ribosomal protein</keyword>
<keyword id="KW-0694">RNA-binding</keyword>
<keyword id="KW-0699">rRNA-binding</keyword>
<feature type="chain" id="PRO_1000086467" description="Large ribosomal subunit protein uL3">
    <location>
        <begin position="1"/>
        <end position="233"/>
    </location>
</feature>
<gene>
    <name evidence="1" type="primary">rplC</name>
    <name type="ordered locus">UPA3_0239</name>
</gene>
<organism>
    <name type="scientific">Ureaplasma parvum serovar 3 (strain ATCC 27815 / 27 / NCTC 11736)</name>
    <dbReference type="NCBI Taxonomy" id="505682"/>
    <lineage>
        <taxon>Bacteria</taxon>
        <taxon>Bacillati</taxon>
        <taxon>Mycoplasmatota</taxon>
        <taxon>Mycoplasmoidales</taxon>
        <taxon>Mycoplasmoidaceae</taxon>
        <taxon>Ureaplasma</taxon>
    </lineage>
</organism>
<proteinExistence type="inferred from homology"/>
<dbReference type="EMBL" id="CP000942">
    <property type="protein sequence ID" value="ACA32950.1"/>
    <property type="molecule type" value="Genomic_DNA"/>
</dbReference>
<dbReference type="RefSeq" id="WP_006688934.1">
    <property type="nucleotide sequence ID" value="NC_010503.1"/>
</dbReference>
<dbReference type="SMR" id="B1AIM0"/>
<dbReference type="GeneID" id="29672579"/>
<dbReference type="KEGG" id="upa:UPA3_0239"/>
<dbReference type="HOGENOM" id="CLU_044142_4_0_14"/>
<dbReference type="Proteomes" id="UP000002162">
    <property type="component" value="Chromosome"/>
</dbReference>
<dbReference type="GO" id="GO:0022625">
    <property type="term" value="C:cytosolic large ribosomal subunit"/>
    <property type="evidence" value="ECO:0007669"/>
    <property type="project" value="TreeGrafter"/>
</dbReference>
<dbReference type="GO" id="GO:0019843">
    <property type="term" value="F:rRNA binding"/>
    <property type="evidence" value="ECO:0007669"/>
    <property type="project" value="UniProtKB-UniRule"/>
</dbReference>
<dbReference type="GO" id="GO:0003735">
    <property type="term" value="F:structural constituent of ribosome"/>
    <property type="evidence" value="ECO:0007669"/>
    <property type="project" value="InterPro"/>
</dbReference>
<dbReference type="GO" id="GO:0006412">
    <property type="term" value="P:translation"/>
    <property type="evidence" value="ECO:0007669"/>
    <property type="project" value="UniProtKB-UniRule"/>
</dbReference>
<dbReference type="FunFam" id="2.40.30.10:FF:000004">
    <property type="entry name" value="50S ribosomal protein L3"/>
    <property type="match status" value="1"/>
</dbReference>
<dbReference type="FunFam" id="3.30.160.810:FF:000001">
    <property type="entry name" value="50S ribosomal protein L3"/>
    <property type="match status" value="1"/>
</dbReference>
<dbReference type="Gene3D" id="3.30.160.810">
    <property type="match status" value="1"/>
</dbReference>
<dbReference type="Gene3D" id="2.40.30.10">
    <property type="entry name" value="Translation factors"/>
    <property type="match status" value="1"/>
</dbReference>
<dbReference type="HAMAP" id="MF_01325_B">
    <property type="entry name" value="Ribosomal_uL3_B"/>
    <property type="match status" value="1"/>
</dbReference>
<dbReference type="InterPro" id="IPR000597">
    <property type="entry name" value="Ribosomal_uL3"/>
</dbReference>
<dbReference type="InterPro" id="IPR019927">
    <property type="entry name" value="Ribosomal_uL3_bac/org-type"/>
</dbReference>
<dbReference type="InterPro" id="IPR019926">
    <property type="entry name" value="Ribosomal_uL3_CS"/>
</dbReference>
<dbReference type="InterPro" id="IPR009000">
    <property type="entry name" value="Transl_B-barrel_sf"/>
</dbReference>
<dbReference type="NCBIfam" id="TIGR03625">
    <property type="entry name" value="L3_bact"/>
    <property type="match status" value="1"/>
</dbReference>
<dbReference type="PANTHER" id="PTHR11229">
    <property type="entry name" value="50S RIBOSOMAL PROTEIN L3"/>
    <property type="match status" value="1"/>
</dbReference>
<dbReference type="PANTHER" id="PTHR11229:SF16">
    <property type="entry name" value="LARGE RIBOSOMAL SUBUNIT PROTEIN UL3C"/>
    <property type="match status" value="1"/>
</dbReference>
<dbReference type="Pfam" id="PF00297">
    <property type="entry name" value="Ribosomal_L3"/>
    <property type="match status" value="1"/>
</dbReference>
<dbReference type="SUPFAM" id="SSF50447">
    <property type="entry name" value="Translation proteins"/>
    <property type="match status" value="1"/>
</dbReference>
<dbReference type="PROSITE" id="PS00474">
    <property type="entry name" value="RIBOSOMAL_L3"/>
    <property type="match status" value="1"/>
</dbReference>
<protein>
    <recommendedName>
        <fullName evidence="1">Large ribosomal subunit protein uL3</fullName>
    </recommendedName>
    <alternativeName>
        <fullName evidence="2">50S ribosomal protein L3</fullName>
    </alternativeName>
</protein>